<protein>
    <recommendedName>
        <fullName evidence="2">Small ribosomal subunit protein uS12</fullName>
    </recommendedName>
    <alternativeName>
        <fullName evidence="4">30S ribosomal protein S12</fullName>
    </alternativeName>
</protein>
<feature type="chain" id="PRO_0000295951" description="Small ribosomal subunit protein uS12">
    <location>
        <begin position="1"/>
        <end position="124"/>
    </location>
</feature>
<feature type="region of interest" description="Disordered" evidence="3">
    <location>
        <begin position="1"/>
        <end position="28"/>
    </location>
</feature>
<feature type="compositionally biased region" description="Basic residues" evidence="3">
    <location>
        <begin position="9"/>
        <end position="18"/>
    </location>
</feature>
<feature type="modified residue" description="3-methylthioaspartic acid" evidence="1">
    <location>
        <position position="89"/>
    </location>
</feature>
<keyword id="KW-0488">Methylation</keyword>
<keyword id="KW-0687">Ribonucleoprotein</keyword>
<keyword id="KW-0689">Ribosomal protein</keyword>
<keyword id="KW-0694">RNA-binding</keyword>
<keyword id="KW-0699">rRNA-binding</keyword>
<keyword id="KW-0820">tRNA-binding</keyword>
<name>RS12_PAEAT</name>
<dbReference type="EMBL" id="CP000474">
    <property type="protein sequence ID" value="ABM08922.1"/>
    <property type="molecule type" value="Genomic_DNA"/>
</dbReference>
<dbReference type="RefSeq" id="WP_009358312.1">
    <property type="nucleotide sequence ID" value="NC_008711.1"/>
</dbReference>
<dbReference type="SMR" id="A1R8V2"/>
<dbReference type="STRING" id="290340.AAur_2955"/>
<dbReference type="GeneID" id="97420997"/>
<dbReference type="KEGG" id="aau:AAur_2955"/>
<dbReference type="eggNOG" id="COG0048">
    <property type="taxonomic scope" value="Bacteria"/>
</dbReference>
<dbReference type="HOGENOM" id="CLU_104295_1_2_11"/>
<dbReference type="OrthoDB" id="9802366at2"/>
<dbReference type="Proteomes" id="UP000000637">
    <property type="component" value="Chromosome"/>
</dbReference>
<dbReference type="GO" id="GO:0015935">
    <property type="term" value="C:small ribosomal subunit"/>
    <property type="evidence" value="ECO:0007669"/>
    <property type="project" value="InterPro"/>
</dbReference>
<dbReference type="GO" id="GO:0019843">
    <property type="term" value="F:rRNA binding"/>
    <property type="evidence" value="ECO:0007669"/>
    <property type="project" value="UniProtKB-UniRule"/>
</dbReference>
<dbReference type="GO" id="GO:0003735">
    <property type="term" value="F:structural constituent of ribosome"/>
    <property type="evidence" value="ECO:0007669"/>
    <property type="project" value="InterPro"/>
</dbReference>
<dbReference type="GO" id="GO:0000049">
    <property type="term" value="F:tRNA binding"/>
    <property type="evidence" value="ECO:0007669"/>
    <property type="project" value="UniProtKB-UniRule"/>
</dbReference>
<dbReference type="GO" id="GO:0006412">
    <property type="term" value="P:translation"/>
    <property type="evidence" value="ECO:0007669"/>
    <property type="project" value="UniProtKB-UniRule"/>
</dbReference>
<dbReference type="CDD" id="cd03368">
    <property type="entry name" value="Ribosomal_S12"/>
    <property type="match status" value="1"/>
</dbReference>
<dbReference type="FunFam" id="2.40.50.140:FF:000001">
    <property type="entry name" value="30S ribosomal protein S12"/>
    <property type="match status" value="1"/>
</dbReference>
<dbReference type="Gene3D" id="2.40.50.140">
    <property type="entry name" value="Nucleic acid-binding proteins"/>
    <property type="match status" value="1"/>
</dbReference>
<dbReference type="HAMAP" id="MF_00403_B">
    <property type="entry name" value="Ribosomal_uS12_B"/>
    <property type="match status" value="1"/>
</dbReference>
<dbReference type="InterPro" id="IPR012340">
    <property type="entry name" value="NA-bd_OB-fold"/>
</dbReference>
<dbReference type="InterPro" id="IPR006032">
    <property type="entry name" value="Ribosomal_uS12"/>
</dbReference>
<dbReference type="InterPro" id="IPR005679">
    <property type="entry name" value="Ribosomal_uS12_bac"/>
</dbReference>
<dbReference type="NCBIfam" id="TIGR00981">
    <property type="entry name" value="rpsL_bact"/>
    <property type="match status" value="1"/>
</dbReference>
<dbReference type="PANTHER" id="PTHR11652">
    <property type="entry name" value="30S RIBOSOMAL PROTEIN S12 FAMILY MEMBER"/>
    <property type="match status" value="1"/>
</dbReference>
<dbReference type="Pfam" id="PF00164">
    <property type="entry name" value="Ribosom_S12_S23"/>
    <property type="match status" value="1"/>
</dbReference>
<dbReference type="PIRSF" id="PIRSF002133">
    <property type="entry name" value="Ribosomal_S12/S23"/>
    <property type="match status" value="1"/>
</dbReference>
<dbReference type="PRINTS" id="PR01034">
    <property type="entry name" value="RIBOSOMALS12"/>
</dbReference>
<dbReference type="SUPFAM" id="SSF50249">
    <property type="entry name" value="Nucleic acid-binding proteins"/>
    <property type="match status" value="1"/>
</dbReference>
<dbReference type="PROSITE" id="PS00055">
    <property type="entry name" value="RIBOSOMAL_S12"/>
    <property type="match status" value="1"/>
</dbReference>
<evidence type="ECO:0000250" key="1"/>
<evidence type="ECO:0000255" key="2">
    <source>
        <dbReference type="HAMAP-Rule" id="MF_00403"/>
    </source>
</evidence>
<evidence type="ECO:0000256" key="3">
    <source>
        <dbReference type="SAM" id="MobiDB-lite"/>
    </source>
</evidence>
<evidence type="ECO:0000305" key="4"/>
<organism>
    <name type="scientific">Paenarthrobacter aurescens (strain TC1)</name>
    <dbReference type="NCBI Taxonomy" id="290340"/>
    <lineage>
        <taxon>Bacteria</taxon>
        <taxon>Bacillati</taxon>
        <taxon>Actinomycetota</taxon>
        <taxon>Actinomycetes</taxon>
        <taxon>Micrococcales</taxon>
        <taxon>Micrococcaceae</taxon>
        <taxon>Paenarthrobacter</taxon>
    </lineage>
</organism>
<reference key="1">
    <citation type="journal article" date="2006" name="PLoS Genet.">
        <title>Secrets of soil survival revealed by the genome sequence of Arthrobacter aurescens TC1.</title>
        <authorList>
            <person name="Mongodin E.F."/>
            <person name="Shapir N."/>
            <person name="Daugherty S.C."/>
            <person name="DeBoy R.T."/>
            <person name="Emerson J.B."/>
            <person name="Shvartzbeyn A."/>
            <person name="Radune D."/>
            <person name="Vamathevan J."/>
            <person name="Riggs F."/>
            <person name="Grinberg V."/>
            <person name="Khouri H.M."/>
            <person name="Wackett L.P."/>
            <person name="Nelson K.E."/>
            <person name="Sadowsky M.J."/>
        </authorList>
    </citation>
    <scope>NUCLEOTIDE SEQUENCE [LARGE SCALE GENOMIC DNA]</scope>
    <source>
        <strain>TC1</strain>
    </source>
</reference>
<comment type="function">
    <text evidence="2">With S4 and S5 plays an important role in translational accuracy.</text>
</comment>
<comment type="function">
    <text evidence="2">Interacts with and stabilizes bases of the 16S rRNA that are involved in tRNA selection in the A site and with the mRNA backbone. Located at the interface of the 30S and 50S subunits, it traverses the body of the 30S subunit contacting proteins on the other side and probably holding the rRNA structure together. The combined cluster of proteins S8, S12 and S17 appears to hold together the shoulder and platform of the 30S subunit.</text>
</comment>
<comment type="subunit">
    <text evidence="2">Part of the 30S ribosomal subunit. Contacts proteins S8 and S17. May interact with IF1 in the 30S initiation complex.</text>
</comment>
<comment type="similarity">
    <text evidence="2">Belongs to the universal ribosomal protein uS12 family.</text>
</comment>
<sequence length="124" mass="13685">MPTINQLVRKGRTPKVSKTKAPALKGSPMRRGVCTRVYTTTPKKPNSALRKVARVRLNGGVEVTAYIPGVGHNLQEHSIVLVRGGRVKDLPGVRYKIVRGALDTQGVKNRKQARSRYGAKMEKK</sequence>
<proteinExistence type="inferred from homology"/>
<gene>
    <name evidence="2" type="primary">rpsL</name>
    <name type="ordered locus">AAur_2955</name>
</gene>
<accession>A1R8V2</accession>